<comment type="function">
    <text evidence="1">Forms part of the ribosomal stalk which helps the ribosome interact with GTP-bound translation factors. Is thus essential for accurate translation.</text>
</comment>
<comment type="subunit">
    <text evidence="1">Homodimer. Part of the ribosomal stalk of the 50S ribosomal subunit. Forms a multimeric L10(L12)X complex, where L10 forms an elongated spine to which 2 to 4 L12 dimers bind in a sequential fashion. Binds GTP-bound translation factors.</text>
</comment>
<comment type="similarity">
    <text evidence="1">Belongs to the bacterial ribosomal protein bL12 family.</text>
</comment>
<reference key="1">
    <citation type="journal article" date="2004" name="Genome Res.">
        <title>The genome sequence of Mycoplasma mycoides subsp. mycoides SC type strain PG1T, the causative agent of contagious bovine pleuropneumonia (CBPP).</title>
        <authorList>
            <person name="Westberg J."/>
            <person name="Persson A."/>
            <person name="Holmberg A."/>
            <person name="Goesmann A."/>
            <person name="Lundeberg J."/>
            <person name="Johansson K.-E."/>
            <person name="Pettersson B."/>
            <person name="Uhlen M."/>
        </authorList>
    </citation>
    <scope>NUCLEOTIDE SEQUENCE [LARGE SCALE GENOMIC DNA]</scope>
    <source>
        <strain>CCUG 32753 / NCTC 10114 / PG1</strain>
    </source>
</reference>
<protein>
    <recommendedName>
        <fullName evidence="1">Large ribosomal subunit protein bL12</fullName>
    </recommendedName>
    <alternativeName>
        <fullName evidence="2">50S ribosomal protein L7/L12</fullName>
    </alternativeName>
</protein>
<name>RL7_MYCMS</name>
<proteinExistence type="inferred from homology"/>
<accession>Q6MRX7</accession>
<dbReference type="EMBL" id="BX293980">
    <property type="protein sequence ID" value="CAE77614.1"/>
    <property type="molecule type" value="Genomic_DNA"/>
</dbReference>
<dbReference type="RefSeq" id="NP_975972.1">
    <property type="nucleotide sequence ID" value="NC_005364.2"/>
</dbReference>
<dbReference type="RefSeq" id="WP_011167151.1">
    <property type="nucleotide sequence ID" value="NC_005364.2"/>
</dbReference>
<dbReference type="SMR" id="Q6MRX7"/>
<dbReference type="STRING" id="272632.MSC_1007"/>
<dbReference type="KEGG" id="mmy:MSC_1007"/>
<dbReference type="PATRIC" id="fig|272632.4.peg.1093"/>
<dbReference type="eggNOG" id="COG0222">
    <property type="taxonomic scope" value="Bacteria"/>
</dbReference>
<dbReference type="HOGENOM" id="CLU_086499_3_2_14"/>
<dbReference type="Proteomes" id="UP000001016">
    <property type="component" value="Chromosome"/>
</dbReference>
<dbReference type="GO" id="GO:0022625">
    <property type="term" value="C:cytosolic large ribosomal subunit"/>
    <property type="evidence" value="ECO:0007669"/>
    <property type="project" value="TreeGrafter"/>
</dbReference>
<dbReference type="GO" id="GO:0003729">
    <property type="term" value="F:mRNA binding"/>
    <property type="evidence" value="ECO:0007669"/>
    <property type="project" value="TreeGrafter"/>
</dbReference>
<dbReference type="GO" id="GO:0003735">
    <property type="term" value="F:structural constituent of ribosome"/>
    <property type="evidence" value="ECO:0007669"/>
    <property type="project" value="InterPro"/>
</dbReference>
<dbReference type="GO" id="GO:0006412">
    <property type="term" value="P:translation"/>
    <property type="evidence" value="ECO:0007669"/>
    <property type="project" value="UniProtKB-UniRule"/>
</dbReference>
<dbReference type="FunFam" id="3.30.1390.10:FF:000001">
    <property type="entry name" value="50S ribosomal protein L7/L12"/>
    <property type="match status" value="1"/>
</dbReference>
<dbReference type="Gene3D" id="3.30.1390.10">
    <property type="match status" value="1"/>
</dbReference>
<dbReference type="Gene3D" id="1.20.5.710">
    <property type="entry name" value="Single helix bin"/>
    <property type="match status" value="1"/>
</dbReference>
<dbReference type="HAMAP" id="MF_00368">
    <property type="entry name" value="Ribosomal_bL12"/>
    <property type="match status" value="1"/>
</dbReference>
<dbReference type="InterPro" id="IPR000206">
    <property type="entry name" value="Ribosomal_bL12"/>
</dbReference>
<dbReference type="InterPro" id="IPR013823">
    <property type="entry name" value="Ribosomal_bL12_C"/>
</dbReference>
<dbReference type="InterPro" id="IPR014719">
    <property type="entry name" value="Ribosomal_bL12_C/ClpS-like"/>
</dbReference>
<dbReference type="InterPro" id="IPR008932">
    <property type="entry name" value="Ribosomal_bL12_oligo"/>
</dbReference>
<dbReference type="InterPro" id="IPR036235">
    <property type="entry name" value="Ribosomal_bL12_oligo_N_sf"/>
</dbReference>
<dbReference type="NCBIfam" id="TIGR00855">
    <property type="entry name" value="L12"/>
    <property type="match status" value="1"/>
</dbReference>
<dbReference type="PANTHER" id="PTHR45987">
    <property type="entry name" value="39S RIBOSOMAL PROTEIN L12"/>
    <property type="match status" value="1"/>
</dbReference>
<dbReference type="PANTHER" id="PTHR45987:SF4">
    <property type="entry name" value="LARGE RIBOSOMAL SUBUNIT PROTEIN BL12M"/>
    <property type="match status" value="1"/>
</dbReference>
<dbReference type="Pfam" id="PF00542">
    <property type="entry name" value="Ribosomal_L12"/>
    <property type="match status" value="1"/>
</dbReference>
<dbReference type="Pfam" id="PF16320">
    <property type="entry name" value="Ribosomal_L12_N"/>
    <property type="match status" value="1"/>
</dbReference>
<dbReference type="SUPFAM" id="SSF54736">
    <property type="entry name" value="ClpS-like"/>
    <property type="match status" value="1"/>
</dbReference>
<dbReference type="SUPFAM" id="SSF48300">
    <property type="entry name" value="Ribosomal protein L7/12, oligomerisation (N-terminal) domain"/>
    <property type="match status" value="1"/>
</dbReference>
<gene>
    <name evidence="1" type="primary">rplL</name>
    <name type="ordered locus">MSC_1007</name>
</gene>
<keyword id="KW-1185">Reference proteome</keyword>
<keyword id="KW-0687">Ribonucleoprotein</keyword>
<keyword id="KW-0689">Ribosomal protein</keyword>
<sequence length="122" mass="12876">MPITKDEIIKALEEMKLNELNELVKAIEDHFGVVASVGVAAAAPAEATNAAPTEVSVVMTSVGQQKVAVIKVVKELTGVGLMDAKKIVDGTMPVTIKEHVKPEEAEEMKAKLVEAGASIDLK</sequence>
<organism>
    <name type="scientific">Mycoplasma mycoides subsp. mycoides SC (strain CCUG 32753 / NCTC 10114 / PG1)</name>
    <dbReference type="NCBI Taxonomy" id="272632"/>
    <lineage>
        <taxon>Bacteria</taxon>
        <taxon>Bacillati</taxon>
        <taxon>Mycoplasmatota</taxon>
        <taxon>Mollicutes</taxon>
        <taxon>Mycoplasmataceae</taxon>
        <taxon>Mycoplasma</taxon>
    </lineage>
</organism>
<evidence type="ECO:0000255" key="1">
    <source>
        <dbReference type="HAMAP-Rule" id="MF_00368"/>
    </source>
</evidence>
<evidence type="ECO:0000305" key="2"/>
<feature type="chain" id="PRO_1000195816" description="Large ribosomal subunit protein bL12">
    <location>
        <begin position="1"/>
        <end position="122"/>
    </location>
</feature>